<comment type="subcellular location">
    <subcellularLocation>
        <location evidence="2">Membrane</location>
        <topology evidence="2">Single-pass membrane protein</topology>
    </subcellularLocation>
</comment>
<comment type="miscellaneous">
    <text evidence="2">Completely overlaps AMA1.</text>
</comment>
<comment type="caution">
    <text evidence="3">Product of a dubious gene prediction unlikely to encode a functional protein. Because of that it is not part of the S.cerevisiae S288c complete/reference proteome set.</text>
</comment>
<comment type="sequence caution" evidence="2">
    <conflict type="frameshift">
        <sequence resource="EMBL-CDS" id="CAA61175"/>
    </conflict>
</comment>
<comment type="sequence caution" evidence="2">
    <conflict type="frameshift">
        <sequence resource="EMBL-CDS" id="CAA97254"/>
    </conflict>
</comment>
<proteinExistence type="uncertain"/>
<gene>
    <name type="ordered locus">YGR226C</name>
    <name type="ORF">G8544</name>
</gene>
<dbReference type="EMBL" id="X87941">
    <property type="protein sequence ID" value="CAA61175.1"/>
    <property type="status" value="ALT_FRAME"/>
    <property type="molecule type" value="Genomic_DNA"/>
</dbReference>
<dbReference type="EMBL" id="Z73011">
    <property type="protein sequence ID" value="CAA97254.1"/>
    <property type="status" value="ALT_FRAME"/>
    <property type="molecule type" value="Genomic_DNA"/>
</dbReference>
<dbReference type="PIR" id="S57690">
    <property type="entry name" value="S57690"/>
</dbReference>
<dbReference type="IntAct" id="P50083">
    <property type="interactions" value="1"/>
</dbReference>
<dbReference type="PaxDb" id="4932-YGR226C"/>
<dbReference type="EnsemblFungi" id="YGR226C_mRNA">
    <property type="protein sequence ID" value="YGR226C"/>
    <property type="gene ID" value="YGR226C"/>
</dbReference>
<dbReference type="AGR" id="SGD:S000003458"/>
<dbReference type="SGD" id="S000003458">
    <property type="gene designation" value="YGR226C"/>
</dbReference>
<dbReference type="HOGENOM" id="CLU_2777834_0_0_1"/>
<dbReference type="GO" id="GO:0016020">
    <property type="term" value="C:membrane"/>
    <property type="evidence" value="ECO:0007669"/>
    <property type="project" value="UniProtKB-SubCell"/>
</dbReference>
<evidence type="ECO:0000255" key="1"/>
<evidence type="ECO:0000305" key="2"/>
<evidence type="ECO:0000305" key="3">
    <source>
    </source>
</evidence>
<protein>
    <recommendedName>
        <fullName>Putative uncharacterized protein YGR226C</fullName>
    </recommendedName>
</protein>
<reference key="1">
    <citation type="journal article" date="1996" name="Yeast">
        <title>Sequence analysis of the 43 kb CRM1-YLM9-PET54-DIE2-SMI1-PHO81-YHB4-PFK1 region from the right arm of Saccharomyces cerevisiae chromosome VII.</title>
        <authorList>
            <person name="van der Aart Q.J.M."/>
            <person name="Kleine K."/>
            <person name="Steensma H.Y."/>
        </authorList>
    </citation>
    <scope>NUCLEOTIDE SEQUENCE [GENOMIC DNA]</scope>
    <source>
        <strain>ATCC 204508 / S288c</strain>
    </source>
</reference>
<reference key="2">
    <citation type="journal article" date="1997" name="Nature">
        <title>The nucleotide sequence of Saccharomyces cerevisiae chromosome VII.</title>
        <authorList>
            <person name="Tettelin H."/>
            <person name="Agostoni-Carbone M.L."/>
            <person name="Albermann K."/>
            <person name="Albers M."/>
            <person name="Arroyo J."/>
            <person name="Backes U."/>
            <person name="Barreiros T."/>
            <person name="Bertani I."/>
            <person name="Bjourson A.J."/>
            <person name="Brueckner M."/>
            <person name="Bruschi C.V."/>
            <person name="Carignani G."/>
            <person name="Castagnoli L."/>
            <person name="Cerdan E."/>
            <person name="Clemente M.L."/>
            <person name="Coblenz A."/>
            <person name="Coglievina M."/>
            <person name="Coissac E."/>
            <person name="Defoor E."/>
            <person name="Del Bino S."/>
            <person name="Delius H."/>
            <person name="Delneri D."/>
            <person name="de Wergifosse P."/>
            <person name="Dujon B."/>
            <person name="Durand P."/>
            <person name="Entian K.-D."/>
            <person name="Eraso P."/>
            <person name="Escribano V."/>
            <person name="Fabiani L."/>
            <person name="Fartmann B."/>
            <person name="Feroli F."/>
            <person name="Feuermann M."/>
            <person name="Frontali L."/>
            <person name="Garcia-Gonzalez M."/>
            <person name="Garcia-Saez M.I."/>
            <person name="Goffeau A."/>
            <person name="Guerreiro P."/>
            <person name="Hani J."/>
            <person name="Hansen M."/>
            <person name="Hebling U."/>
            <person name="Hernandez K."/>
            <person name="Heumann K."/>
            <person name="Hilger F."/>
            <person name="Hofmann B."/>
            <person name="Indge K.J."/>
            <person name="James C.M."/>
            <person name="Klima R."/>
            <person name="Koetter P."/>
            <person name="Kramer B."/>
            <person name="Kramer W."/>
            <person name="Lauquin G."/>
            <person name="Leuther H."/>
            <person name="Louis E.J."/>
            <person name="Maillier E."/>
            <person name="Marconi A."/>
            <person name="Martegani E."/>
            <person name="Mazon M.J."/>
            <person name="Mazzoni C."/>
            <person name="McReynolds A.D.K."/>
            <person name="Melchioretto P."/>
            <person name="Mewes H.-W."/>
            <person name="Minenkova O."/>
            <person name="Mueller-Auer S."/>
            <person name="Nawrocki A."/>
            <person name="Netter P."/>
            <person name="Neu R."/>
            <person name="Nombela C."/>
            <person name="Oliver S.G."/>
            <person name="Panzeri L."/>
            <person name="Paoluzi S."/>
            <person name="Plevani P."/>
            <person name="Portetelle D."/>
            <person name="Portillo F."/>
            <person name="Potier S."/>
            <person name="Purnelle B."/>
            <person name="Rieger M."/>
            <person name="Riles L."/>
            <person name="Rinaldi T."/>
            <person name="Robben J."/>
            <person name="Rodrigues-Pousada C."/>
            <person name="Rodriguez-Belmonte E."/>
            <person name="Rodriguez-Torres A.M."/>
            <person name="Rose M."/>
            <person name="Ruzzi M."/>
            <person name="Saliola M."/>
            <person name="Sanchez-Perez M."/>
            <person name="Schaefer B."/>
            <person name="Schaefer M."/>
            <person name="Scharfe M."/>
            <person name="Schmidheini T."/>
            <person name="Schreer A."/>
            <person name="Skala J."/>
            <person name="Souciet J.-L."/>
            <person name="Steensma H.Y."/>
            <person name="Talla E."/>
            <person name="Thierry A."/>
            <person name="Vandenbol M."/>
            <person name="van der Aart Q.J.M."/>
            <person name="Van Dyck L."/>
            <person name="Vanoni M."/>
            <person name="Verhasselt P."/>
            <person name="Voet M."/>
            <person name="Volckaert G."/>
            <person name="Wambutt R."/>
            <person name="Watson M.D."/>
            <person name="Weber N."/>
            <person name="Wedler E."/>
            <person name="Wedler H."/>
            <person name="Wipfli P."/>
            <person name="Wolf K."/>
            <person name="Wright L.F."/>
            <person name="Zaccaria P."/>
            <person name="Zimmermann M."/>
            <person name="Zollner A."/>
            <person name="Kleine K."/>
        </authorList>
    </citation>
    <scope>NUCLEOTIDE SEQUENCE [LARGE SCALE GENOMIC DNA]</scope>
    <source>
        <strain>ATCC 204508 / S288c</strain>
    </source>
</reference>
<reference key="3">
    <citation type="journal article" date="2014" name="G3 (Bethesda)">
        <title>The reference genome sequence of Saccharomyces cerevisiae: Then and now.</title>
        <authorList>
            <person name="Engel S.R."/>
            <person name="Dietrich F.S."/>
            <person name="Fisk D.G."/>
            <person name="Binkley G."/>
            <person name="Balakrishnan R."/>
            <person name="Costanzo M.C."/>
            <person name="Dwight S.S."/>
            <person name="Hitz B.C."/>
            <person name="Karra K."/>
            <person name="Nash R.S."/>
            <person name="Weng S."/>
            <person name="Wong E.D."/>
            <person name="Lloyd P."/>
            <person name="Skrzypek M.S."/>
            <person name="Miyasato S.R."/>
            <person name="Simison M."/>
            <person name="Cherry J.M."/>
        </authorList>
    </citation>
    <scope>GENOME REANNOTATION</scope>
    <source>
        <strain>ATCC 204508 / S288c</strain>
    </source>
</reference>
<reference key="4">
    <citation type="journal article" date="2003" name="Genome Biol.">
        <title>Reinvestigation of the Saccharomyces cerevisiae genome annotation by comparison to the genome of a related fungus: Ashbya gossypii.</title>
        <authorList>
            <person name="Brachat S."/>
            <person name="Dietrich F.S."/>
            <person name="Voegeli S."/>
            <person name="Zhang Z."/>
            <person name="Stuart L."/>
            <person name="Lerch A."/>
            <person name="Gates K."/>
            <person name="Gaffney T.D."/>
            <person name="Philippsen P."/>
        </authorList>
    </citation>
    <scope>IDENTIFICATION OF FRAMESHIFT</scope>
</reference>
<feature type="chain" id="PRO_0000202849" description="Putative uncharacterized protein YGR226C">
    <location>
        <begin position="1"/>
        <end position="69"/>
    </location>
</feature>
<feature type="transmembrane region" description="Helical" evidence="1">
    <location>
        <begin position="13"/>
        <end position="35"/>
    </location>
</feature>
<sequence>MCCFDTLHIFYNIRSINPTLLNFINYFLLIVPQFIKSYRFIVSGNANCHGTWRDYCAQYTQRVGRPNFE</sequence>
<keyword id="KW-0472">Membrane</keyword>
<keyword id="KW-0812">Transmembrane</keyword>
<keyword id="KW-1133">Transmembrane helix</keyword>
<accession>P50083</accession>
<name>YG4T_YEAST</name>
<organism>
    <name type="scientific">Saccharomyces cerevisiae (strain ATCC 204508 / S288c)</name>
    <name type="common">Baker's yeast</name>
    <dbReference type="NCBI Taxonomy" id="559292"/>
    <lineage>
        <taxon>Eukaryota</taxon>
        <taxon>Fungi</taxon>
        <taxon>Dikarya</taxon>
        <taxon>Ascomycota</taxon>
        <taxon>Saccharomycotina</taxon>
        <taxon>Saccharomycetes</taxon>
        <taxon>Saccharomycetales</taxon>
        <taxon>Saccharomycetaceae</taxon>
        <taxon>Saccharomyces</taxon>
    </lineage>
</organism>